<evidence type="ECO:0000255" key="1">
    <source>
        <dbReference type="HAMAP-Rule" id="MF_00664"/>
    </source>
</evidence>
<gene>
    <name evidence="1" type="primary">psd</name>
    <name type="ordered locus">CHU_0357</name>
</gene>
<keyword id="KW-1003">Cell membrane</keyword>
<keyword id="KW-0210">Decarboxylase</keyword>
<keyword id="KW-0444">Lipid biosynthesis</keyword>
<keyword id="KW-0443">Lipid metabolism</keyword>
<keyword id="KW-0456">Lyase</keyword>
<keyword id="KW-0472">Membrane</keyword>
<keyword id="KW-0594">Phospholipid biosynthesis</keyword>
<keyword id="KW-1208">Phospholipid metabolism</keyword>
<keyword id="KW-0670">Pyruvate</keyword>
<keyword id="KW-1185">Reference proteome</keyword>
<keyword id="KW-0865">Zymogen</keyword>
<reference key="1">
    <citation type="journal article" date="2007" name="Appl. Environ. Microbiol.">
        <title>Genome sequence of the cellulolytic gliding bacterium Cytophaga hutchinsonii.</title>
        <authorList>
            <person name="Xie G."/>
            <person name="Bruce D.C."/>
            <person name="Challacombe J.F."/>
            <person name="Chertkov O."/>
            <person name="Detter J.C."/>
            <person name="Gilna P."/>
            <person name="Han C.S."/>
            <person name="Lucas S."/>
            <person name="Misra M."/>
            <person name="Myers G.L."/>
            <person name="Richardson P."/>
            <person name="Tapia R."/>
            <person name="Thayer N."/>
            <person name="Thompson L.S."/>
            <person name="Brettin T.S."/>
            <person name="Henrissat B."/>
            <person name="Wilson D.B."/>
            <person name="McBride M.J."/>
        </authorList>
    </citation>
    <scope>NUCLEOTIDE SEQUENCE [LARGE SCALE GENOMIC DNA]</scope>
    <source>
        <strain>ATCC 33406 / DSM 1761 / JCM 20678 / CIP 103989 / IAM 12607 / NBRC 15051 / NCIMB 9469 / D465</strain>
    </source>
</reference>
<protein>
    <recommendedName>
        <fullName evidence="1">Phosphatidylserine decarboxylase proenzyme</fullName>
        <ecNumber evidence="1">4.1.1.65</ecNumber>
    </recommendedName>
    <component>
        <recommendedName>
            <fullName evidence="1">Phosphatidylserine decarboxylase alpha chain</fullName>
        </recommendedName>
    </component>
    <component>
        <recommendedName>
            <fullName evidence="1">Phosphatidylserine decarboxylase beta chain</fullName>
        </recommendedName>
    </component>
</protein>
<accession>Q11Y69</accession>
<name>PSD_CYTH3</name>
<sequence>MTIHKEGYRSLFYVSAFLFLLNFLIYYFFPEASILQKTVLVISLLIFLVVLQFFRNPSRTIEINDNQIIAPADGKVVVIEEVIETEYFNEKRRQISIFMSPFNVHSNRNAVSGIVKFFKYHPGKFLVAWHPKSSTENERTTTVVQTKNNEQILMRQIAGALARRIVWYIDENSKVTQGEEFGFIKFGSRVDLFIPLDAKVKVSLNQTTVGGKTVIAEFYS</sequence>
<comment type="function">
    <text evidence="1">Catalyzes the formation of phosphatidylethanolamine (PtdEtn) from phosphatidylserine (PtdSer).</text>
</comment>
<comment type="catalytic activity">
    <reaction evidence="1">
        <text>a 1,2-diacyl-sn-glycero-3-phospho-L-serine + H(+) = a 1,2-diacyl-sn-glycero-3-phosphoethanolamine + CO2</text>
        <dbReference type="Rhea" id="RHEA:20828"/>
        <dbReference type="ChEBI" id="CHEBI:15378"/>
        <dbReference type="ChEBI" id="CHEBI:16526"/>
        <dbReference type="ChEBI" id="CHEBI:57262"/>
        <dbReference type="ChEBI" id="CHEBI:64612"/>
        <dbReference type="EC" id="4.1.1.65"/>
    </reaction>
</comment>
<comment type="cofactor">
    <cofactor evidence="1">
        <name>pyruvate</name>
        <dbReference type="ChEBI" id="CHEBI:15361"/>
    </cofactor>
    <text evidence="1">Binds 1 pyruvoyl group covalently per subunit.</text>
</comment>
<comment type="pathway">
    <text evidence="1">Phospholipid metabolism; phosphatidylethanolamine biosynthesis; phosphatidylethanolamine from CDP-diacylglycerol: step 2/2.</text>
</comment>
<comment type="subunit">
    <text evidence="1">Heterodimer of a large membrane-associated beta subunit and a small pyruvoyl-containing alpha subunit.</text>
</comment>
<comment type="subcellular location">
    <subcellularLocation>
        <location evidence="1">Cell membrane</location>
        <topology evidence="1">Peripheral membrane protein</topology>
    </subcellularLocation>
</comment>
<comment type="PTM">
    <text evidence="1">Is synthesized initially as an inactive proenzyme. Formation of the active enzyme involves a self-maturation process in which the active site pyruvoyl group is generated from an internal serine residue via an autocatalytic post-translational modification. Two non-identical subunits are generated from the proenzyme in this reaction, and the pyruvate is formed at the N-terminus of the alpha chain, which is derived from the carboxyl end of the proenzyme. The post-translation cleavage follows an unusual pathway, termed non-hydrolytic serinolysis, in which the side chain hydroxyl group of the serine supplies its oxygen atom to form the C-terminus of the beta chain, while the remainder of the serine residue undergoes an oxidative deamination to produce ammonia and the pyruvoyl prosthetic group on the alpha chain.</text>
</comment>
<comment type="similarity">
    <text evidence="1">Belongs to the phosphatidylserine decarboxylase family. PSD-A subfamily.</text>
</comment>
<proteinExistence type="inferred from homology"/>
<dbReference type="EC" id="4.1.1.65" evidence="1"/>
<dbReference type="EMBL" id="CP000383">
    <property type="protein sequence ID" value="ABG57647.1"/>
    <property type="molecule type" value="Genomic_DNA"/>
</dbReference>
<dbReference type="RefSeq" id="WP_011583763.1">
    <property type="nucleotide sequence ID" value="NC_008255.1"/>
</dbReference>
<dbReference type="STRING" id="269798.CHU_0357"/>
<dbReference type="KEGG" id="chu:CHU_0357"/>
<dbReference type="eggNOG" id="COG0688">
    <property type="taxonomic scope" value="Bacteria"/>
</dbReference>
<dbReference type="HOGENOM" id="CLU_072492_1_0_10"/>
<dbReference type="OrthoDB" id="9790893at2"/>
<dbReference type="UniPathway" id="UPA00558">
    <property type="reaction ID" value="UER00616"/>
</dbReference>
<dbReference type="Proteomes" id="UP000001822">
    <property type="component" value="Chromosome"/>
</dbReference>
<dbReference type="GO" id="GO:0005886">
    <property type="term" value="C:plasma membrane"/>
    <property type="evidence" value="ECO:0007669"/>
    <property type="project" value="UniProtKB-SubCell"/>
</dbReference>
<dbReference type="GO" id="GO:0004609">
    <property type="term" value="F:phosphatidylserine decarboxylase activity"/>
    <property type="evidence" value="ECO:0007669"/>
    <property type="project" value="UniProtKB-UniRule"/>
</dbReference>
<dbReference type="GO" id="GO:0006646">
    <property type="term" value="P:phosphatidylethanolamine biosynthetic process"/>
    <property type="evidence" value="ECO:0007669"/>
    <property type="project" value="UniProtKB-UniRule"/>
</dbReference>
<dbReference type="HAMAP" id="MF_00664">
    <property type="entry name" value="PS_decarb_PSD_A"/>
    <property type="match status" value="1"/>
</dbReference>
<dbReference type="InterPro" id="IPR003817">
    <property type="entry name" value="PS_Dcarbxylase"/>
</dbReference>
<dbReference type="InterPro" id="IPR033175">
    <property type="entry name" value="PSD-A"/>
</dbReference>
<dbReference type="NCBIfam" id="NF003678">
    <property type="entry name" value="PRK05305.1-2"/>
    <property type="match status" value="1"/>
</dbReference>
<dbReference type="NCBIfam" id="NF003685">
    <property type="entry name" value="PRK05305.2-5"/>
    <property type="match status" value="1"/>
</dbReference>
<dbReference type="PANTHER" id="PTHR35809">
    <property type="entry name" value="ARCHAETIDYLSERINE DECARBOXYLASE PROENZYME-RELATED"/>
    <property type="match status" value="1"/>
</dbReference>
<dbReference type="PANTHER" id="PTHR35809:SF1">
    <property type="entry name" value="ARCHAETIDYLSERINE DECARBOXYLASE PROENZYME-RELATED"/>
    <property type="match status" value="1"/>
</dbReference>
<dbReference type="Pfam" id="PF02666">
    <property type="entry name" value="PS_Dcarbxylase"/>
    <property type="match status" value="1"/>
</dbReference>
<feature type="chain" id="PRO_0000262205" description="Phosphatidylserine decarboxylase beta chain" evidence="1">
    <location>
        <begin position="1"/>
        <end position="187"/>
    </location>
</feature>
<feature type="chain" id="PRO_0000262206" description="Phosphatidylserine decarboxylase alpha chain" evidence="1">
    <location>
        <begin position="188"/>
        <end position="220"/>
    </location>
</feature>
<feature type="active site" description="Schiff-base intermediate with substrate; via pyruvic acid" evidence="1">
    <location>
        <position position="188"/>
    </location>
</feature>
<feature type="site" description="Cleavage (non-hydrolytic); by autocatalysis" evidence="1">
    <location>
        <begin position="187"/>
        <end position="188"/>
    </location>
</feature>
<feature type="modified residue" description="Pyruvic acid (Ser); by autocatalysis" evidence="1">
    <location>
        <position position="188"/>
    </location>
</feature>
<organism>
    <name type="scientific">Cytophaga hutchinsonii (strain ATCC 33406 / DSM 1761 / CIP 103989 / NBRC 15051 / NCIMB 9469 / D465)</name>
    <dbReference type="NCBI Taxonomy" id="269798"/>
    <lineage>
        <taxon>Bacteria</taxon>
        <taxon>Pseudomonadati</taxon>
        <taxon>Bacteroidota</taxon>
        <taxon>Cytophagia</taxon>
        <taxon>Cytophagales</taxon>
        <taxon>Cytophagaceae</taxon>
        <taxon>Cytophaga</taxon>
    </lineage>
</organism>